<dbReference type="EMBL" id="M22967">
    <property type="protein sequence ID" value="AAA30767.1"/>
    <property type="status" value="ALT_INIT"/>
    <property type="molecule type" value="mRNA"/>
</dbReference>
<dbReference type="PIR" id="A32208">
    <property type="entry name" value="A32208"/>
</dbReference>
<dbReference type="RefSeq" id="NP_776388.1">
    <property type="nucleotide sequence ID" value="NM_173963.1"/>
</dbReference>
<dbReference type="SMR" id="P20488"/>
<dbReference type="DIP" id="DIP-29431N"/>
<dbReference type="FunCoup" id="P20488">
    <property type="interactions" value="1134"/>
</dbReference>
<dbReference type="STRING" id="9913.ENSBTAP00000021428"/>
<dbReference type="GlyCosmos" id="P20488">
    <property type="glycosylation" value="2 sites, No reported glycans"/>
</dbReference>
<dbReference type="GlyGen" id="P20488">
    <property type="glycosylation" value="2 sites"/>
</dbReference>
<dbReference type="PaxDb" id="9913-ENSBTAP00000021428"/>
<dbReference type="GeneID" id="280937"/>
<dbReference type="KEGG" id="bta:280937"/>
<dbReference type="CTD" id="6855"/>
<dbReference type="eggNOG" id="ENOG502QT4W">
    <property type="taxonomic scope" value="Eukaryota"/>
</dbReference>
<dbReference type="InParanoid" id="P20488"/>
<dbReference type="OrthoDB" id="10006326at2759"/>
<dbReference type="Proteomes" id="UP000009136">
    <property type="component" value="Unplaced"/>
</dbReference>
<dbReference type="GO" id="GO:0042584">
    <property type="term" value="C:chromaffin granule membrane"/>
    <property type="evidence" value="ECO:0000314"/>
    <property type="project" value="AgBase"/>
</dbReference>
<dbReference type="GO" id="GO:0030136">
    <property type="term" value="C:clathrin-coated vesicle"/>
    <property type="evidence" value="ECO:0000314"/>
    <property type="project" value="AgBase"/>
</dbReference>
<dbReference type="GO" id="GO:0043005">
    <property type="term" value="C:neuron projection"/>
    <property type="evidence" value="ECO:0000250"/>
    <property type="project" value="UniProtKB"/>
</dbReference>
<dbReference type="GO" id="GO:0048786">
    <property type="term" value="C:presynaptic active zone"/>
    <property type="evidence" value="ECO:0000318"/>
    <property type="project" value="GO_Central"/>
</dbReference>
<dbReference type="GO" id="GO:0030672">
    <property type="term" value="C:synaptic vesicle membrane"/>
    <property type="evidence" value="ECO:0000318"/>
    <property type="project" value="GO_Central"/>
</dbReference>
<dbReference type="GO" id="GO:0051020">
    <property type="term" value="F:GTPase binding"/>
    <property type="evidence" value="ECO:0000353"/>
    <property type="project" value="AgBase"/>
</dbReference>
<dbReference type="GO" id="GO:0042802">
    <property type="term" value="F:identical protein binding"/>
    <property type="evidence" value="ECO:0000353"/>
    <property type="project" value="IntAct"/>
</dbReference>
<dbReference type="GO" id="GO:0006897">
    <property type="term" value="P:endocytosis"/>
    <property type="evidence" value="ECO:0000250"/>
    <property type="project" value="UniProtKB"/>
</dbReference>
<dbReference type="GO" id="GO:0045920">
    <property type="term" value="P:negative regulation of exocytosis"/>
    <property type="evidence" value="ECO:0000314"/>
    <property type="project" value="AgBase"/>
</dbReference>
<dbReference type="GO" id="GO:0048168">
    <property type="term" value="P:regulation of neuronal synaptic plasticity"/>
    <property type="evidence" value="ECO:0000318"/>
    <property type="project" value="GO_Central"/>
</dbReference>
<dbReference type="GO" id="GO:2000474">
    <property type="term" value="P:regulation of opioid receptor signaling pathway"/>
    <property type="evidence" value="ECO:0000250"/>
    <property type="project" value="UniProtKB"/>
</dbReference>
<dbReference type="InterPro" id="IPR008253">
    <property type="entry name" value="Marvel"/>
</dbReference>
<dbReference type="InterPro" id="IPR001285">
    <property type="entry name" value="Synaptophysin/porin"/>
</dbReference>
<dbReference type="PANTHER" id="PTHR10306">
    <property type="entry name" value="SYNAPTOPHYSIN"/>
    <property type="match status" value="1"/>
</dbReference>
<dbReference type="PANTHER" id="PTHR10306:SF10">
    <property type="entry name" value="SYNAPTOPHYSIN"/>
    <property type="match status" value="1"/>
</dbReference>
<dbReference type="Pfam" id="PF01284">
    <property type="entry name" value="MARVEL"/>
    <property type="match status" value="1"/>
</dbReference>
<dbReference type="PRINTS" id="PR00220">
    <property type="entry name" value="SYNAPTOPHYSN"/>
</dbReference>
<dbReference type="PROSITE" id="PS51225">
    <property type="entry name" value="MARVEL"/>
    <property type="match status" value="1"/>
</dbReference>
<dbReference type="PROSITE" id="PS00604">
    <property type="entry name" value="SYNAPTOP"/>
    <property type="match status" value="1"/>
</dbReference>
<evidence type="ECO:0000250" key="1"/>
<evidence type="ECO:0000250" key="2">
    <source>
        <dbReference type="UniProtKB" id="P07825"/>
    </source>
</evidence>
<evidence type="ECO:0000250" key="3">
    <source>
        <dbReference type="UniProtKB" id="P08247"/>
    </source>
</evidence>
<evidence type="ECO:0000250" key="4">
    <source>
        <dbReference type="UniProtKB" id="Q62277"/>
    </source>
</evidence>
<evidence type="ECO:0000255" key="5"/>
<evidence type="ECO:0000255" key="6">
    <source>
        <dbReference type="PROSITE-ProRule" id="PRU00581"/>
    </source>
</evidence>
<evidence type="ECO:0000256" key="7">
    <source>
        <dbReference type="SAM" id="MobiDB-lite"/>
    </source>
</evidence>
<evidence type="ECO:0000305" key="8"/>
<sequence>MLLLADMDVVNQLVAGGQFRVVKEPLGFVKVLQWVFAIFAFATCGSYSGELQLSVDCANKTKSDLNIEVEFEYPFRLHEVYFEAPTCQGDPKKIFLVGNYSSSAEFFVTVAVFAFLYSMGALATYIFLQNKYRENNKGPMLDFLATAVFAFMWLVSSSAWAKGLSDVKMATDPENIIKGMHVCHQPGNTCKELRDPVTSGLNTSVVFGFLNLVLWVGNLWFVFKETGWAAPFLRAPPGAPEKQPAPGDAYGQAGYGQGPGGYGPQDSYGPQGGYQPDYGQPASSGGGGYGPQGDYGQQGYGPQGAPTSFSNQM</sequence>
<protein>
    <recommendedName>
        <fullName>Synaptophysin</fullName>
    </recommendedName>
    <alternativeName>
        <fullName>Major synaptic vesicle protein p38</fullName>
    </alternativeName>
</protein>
<organism>
    <name type="scientific">Bos taurus</name>
    <name type="common">Bovine</name>
    <dbReference type="NCBI Taxonomy" id="9913"/>
    <lineage>
        <taxon>Eukaryota</taxon>
        <taxon>Metazoa</taxon>
        <taxon>Chordata</taxon>
        <taxon>Craniata</taxon>
        <taxon>Vertebrata</taxon>
        <taxon>Euteleostomi</taxon>
        <taxon>Mammalia</taxon>
        <taxon>Eutheria</taxon>
        <taxon>Laurasiatheria</taxon>
        <taxon>Artiodactyla</taxon>
        <taxon>Ruminantia</taxon>
        <taxon>Pecora</taxon>
        <taxon>Bovidae</taxon>
        <taxon>Bovinae</taxon>
        <taxon>Bos</taxon>
    </lineage>
</organism>
<gene>
    <name type="primary">SYP</name>
</gene>
<name>SYPH_BOVIN</name>
<keyword id="KW-0106">Calcium</keyword>
<keyword id="KW-0968">Cytoplasmic vesicle</keyword>
<keyword id="KW-0325">Glycoprotein</keyword>
<keyword id="KW-0472">Membrane</keyword>
<keyword id="KW-0597">Phosphoprotein</keyword>
<keyword id="KW-1185">Reference proteome</keyword>
<keyword id="KW-0677">Repeat</keyword>
<keyword id="KW-0770">Synapse</keyword>
<keyword id="KW-0771">Synaptosome</keyword>
<keyword id="KW-0812">Transmembrane</keyword>
<keyword id="KW-1133">Transmembrane helix</keyword>
<keyword id="KW-0832">Ubl conjugation</keyword>
<proteinExistence type="evidence at protein level"/>
<accession>P20488</accession>
<comment type="function">
    <text evidence="1">Possibly involved in structural functions as organizing other membrane components or in targeting the vesicles to the plasma membrane. Involved in the regulation of short-term and long-term synaptic plasticity (By similarity).</text>
</comment>
<comment type="subunit">
    <text evidence="2 3">Homohexamer or homotetramer. Interacts with SRCIN1 (By similarity). Interacts with VAMP2; the interaction is inhibited by interaction of VAPM2 with SEPT8 (By similarity).</text>
</comment>
<comment type="interaction">
    <interactant intactId="EBI-15641786">
        <id>P20488</id>
    </interactant>
    <interactant intactId="EBI-15641786">
        <id>P20488</id>
        <label>SYP</label>
    </interactant>
    <organismsDiffer>false</organismsDiffer>
    <experiments>3</experiments>
</comment>
<comment type="subcellular location">
    <subcellularLocation>
        <location evidence="4">Cytoplasmic vesicle</location>
        <location evidence="4">Secretory vesicle</location>
        <location evidence="4">Synaptic vesicle membrane</location>
        <topology evidence="5">Multi-pass membrane protein</topology>
    </subcellularLocation>
    <subcellularLocation>
        <location evidence="3">Synapse</location>
        <location evidence="3">Synaptosome</location>
    </subcellularLocation>
</comment>
<comment type="tissue specificity">
    <text>Characteristic of a type of small (30-80 nm) neurosecretory vesicles, including presynaptic vesicles, but also vesicles of various neuroendocrine cells of both neuronal and epithelial phenotype.</text>
</comment>
<comment type="domain">
    <text>The calcium-binding activity is thought to be localized in the cytoplasmic tail of the protein.</text>
</comment>
<comment type="PTM">
    <text evidence="1">Ubiquitinated; mediated by SIAH1 or SIAH2 and leading to its subsequent proteasomal degradation.</text>
</comment>
<comment type="PTM">
    <text evidence="2">Phosphorylated by SRC.</text>
</comment>
<comment type="similarity">
    <text evidence="8">Belongs to the synaptophysin/synaptobrevin family.</text>
</comment>
<comment type="sequence caution" evidence="8">
    <conflict type="erroneous initiation">
        <sequence resource="EMBL-CDS" id="AAA30767"/>
    </conflict>
    <text>Truncated N-terminus.</text>
</comment>
<reference key="1">
    <citation type="journal article" date="1989" name="J. Biol. Chem.">
        <title>Transmembrane topography and evolutionary conservation of synaptophysin.</title>
        <authorList>
            <person name="Johnston P.A."/>
            <person name="Jahn R."/>
            <person name="Suedhof T.C."/>
        </authorList>
    </citation>
    <scope>NUCLEOTIDE SEQUENCE [MRNA]</scope>
</reference>
<feature type="chain" id="PRO_0000179160" description="Synaptophysin">
    <location>
        <begin position="1"/>
        <end position="313"/>
    </location>
</feature>
<feature type="topological domain" description="Cytoplasmic" evidence="5">
    <location>
        <begin position="1"/>
        <end position="25"/>
    </location>
</feature>
<feature type="transmembrane region" description="Helical" evidence="5">
    <location>
        <begin position="26"/>
        <end position="49"/>
    </location>
</feature>
<feature type="topological domain" description="Vesicular" evidence="5">
    <location>
        <begin position="50"/>
        <end position="106"/>
    </location>
</feature>
<feature type="transmembrane region" description="Helical" evidence="5">
    <location>
        <begin position="107"/>
        <end position="130"/>
    </location>
</feature>
<feature type="topological domain" description="Cytoplasmic" evidence="5">
    <location>
        <begin position="131"/>
        <end position="137"/>
    </location>
</feature>
<feature type="transmembrane region" description="Helical" evidence="5">
    <location>
        <begin position="138"/>
        <end position="161"/>
    </location>
</feature>
<feature type="topological domain" description="Vesicular" evidence="5">
    <location>
        <begin position="162"/>
        <end position="199"/>
    </location>
</feature>
<feature type="transmembrane region" description="Helical" evidence="5">
    <location>
        <begin position="200"/>
        <end position="223"/>
    </location>
</feature>
<feature type="topological domain" description="Cytoplasmic" evidence="5">
    <location>
        <begin position="224"/>
        <end position="313"/>
    </location>
</feature>
<feature type="domain" description="MARVEL" evidence="6">
    <location>
        <begin position="21"/>
        <end position="227"/>
    </location>
</feature>
<feature type="region of interest" description="Disordered" evidence="7">
    <location>
        <begin position="238"/>
        <end position="313"/>
    </location>
</feature>
<feature type="region of interest" description="Repeats, Gly/Tyr-rich">
    <location>
        <begin position="254"/>
        <end position="304"/>
    </location>
</feature>
<feature type="compositionally biased region" description="Gly residues" evidence="7">
    <location>
        <begin position="253"/>
        <end position="263"/>
    </location>
</feature>
<feature type="compositionally biased region" description="Low complexity" evidence="7">
    <location>
        <begin position="264"/>
        <end position="283"/>
    </location>
</feature>
<feature type="compositionally biased region" description="Gly residues" evidence="7">
    <location>
        <begin position="284"/>
        <end position="302"/>
    </location>
</feature>
<feature type="modified residue" description="Phosphotyrosine" evidence="4">
    <location>
        <position position="81"/>
    </location>
</feature>
<feature type="glycosylation site" description="N-linked (GlcNAc...) asparagine" evidence="5">
    <location>
        <position position="59"/>
    </location>
</feature>
<feature type="glycosylation site" description="N-linked (GlcNAc...) asparagine" evidence="5">
    <location>
        <position position="99"/>
    </location>
</feature>